<keyword id="KW-0521">NADP</keyword>
<keyword id="KW-0560">Oxidoreductase</keyword>
<gene>
    <name type="primary">gdhA</name>
</gene>
<proteinExistence type="inferred from homology"/>
<dbReference type="EC" id="1.4.1.4"/>
<dbReference type="EMBL" id="X16399">
    <property type="protein sequence ID" value="CAA34434.1"/>
    <property type="molecule type" value="Genomic_DNA"/>
</dbReference>
<dbReference type="SMR" id="P14657"/>
<dbReference type="GO" id="GO:0005737">
    <property type="term" value="C:cytoplasm"/>
    <property type="evidence" value="ECO:0000250"/>
    <property type="project" value="UniProtKB"/>
</dbReference>
<dbReference type="GO" id="GO:0005829">
    <property type="term" value="C:cytosol"/>
    <property type="evidence" value="ECO:0007669"/>
    <property type="project" value="TreeGrafter"/>
</dbReference>
<dbReference type="GO" id="GO:0004354">
    <property type="term" value="F:glutamate dehydrogenase (NADP+) activity"/>
    <property type="evidence" value="ECO:0000250"/>
    <property type="project" value="UniProtKB"/>
</dbReference>
<dbReference type="GO" id="GO:0006537">
    <property type="term" value="P:glutamate biosynthetic process"/>
    <property type="evidence" value="ECO:0000250"/>
    <property type="project" value="UniProtKB"/>
</dbReference>
<dbReference type="CDD" id="cd05313">
    <property type="entry name" value="NAD_bind_2_Glu_DH"/>
    <property type="match status" value="1"/>
</dbReference>
<dbReference type="FunFam" id="1.10.285.10:FF:000001">
    <property type="entry name" value="Glutamate dehydrogenase"/>
    <property type="match status" value="1"/>
</dbReference>
<dbReference type="FunFam" id="3.40.50.10860:FF:000002">
    <property type="entry name" value="Glutamate dehydrogenase"/>
    <property type="match status" value="1"/>
</dbReference>
<dbReference type="FunFam" id="3.40.50.720:FF:000030">
    <property type="entry name" value="Glutamate dehydrogenase"/>
    <property type="match status" value="1"/>
</dbReference>
<dbReference type="Gene3D" id="1.10.285.10">
    <property type="entry name" value="Glutamate Dehydrogenase, chain A, domain 3"/>
    <property type="match status" value="2"/>
</dbReference>
<dbReference type="Gene3D" id="3.40.50.10860">
    <property type="entry name" value="Leucine Dehydrogenase, chain A, domain 1"/>
    <property type="match status" value="1"/>
</dbReference>
<dbReference type="Gene3D" id="3.40.50.720">
    <property type="entry name" value="NAD(P)-binding Rossmann-like Domain"/>
    <property type="match status" value="1"/>
</dbReference>
<dbReference type="InterPro" id="IPR046346">
    <property type="entry name" value="Aminoacid_DH-like_N_sf"/>
</dbReference>
<dbReference type="InterPro" id="IPR006095">
    <property type="entry name" value="Glu/Leu/Phe/Val/Trp_DH"/>
</dbReference>
<dbReference type="InterPro" id="IPR006096">
    <property type="entry name" value="Glu/Leu/Phe/Val/Trp_DH_C"/>
</dbReference>
<dbReference type="InterPro" id="IPR006097">
    <property type="entry name" value="Glu/Leu/Phe/Val/Trp_DH_dimer"/>
</dbReference>
<dbReference type="InterPro" id="IPR033524">
    <property type="entry name" value="Glu/Leu/Phe/Val_DH_AS"/>
</dbReference>
<dbReference type="InterPro" id="IPR014362">
    <property type="entry name" value="Glu_DH"/>
</dbReference>
<dbReference type="InterPro" id="IPR050724">
    <property type="entry name" value="Glu_Leu_Phe_Val_DH"/>
</dbReference>
<dbReference type="InterPro" id="IPR036291">
    <property type="entry name" value="NAD(P)-bd_dom_sf"/>
</dbReference>
<dbReference type="InterPro" id="IPR033922">
    <property type="entry name" value="NAD_bind_Glu_DH"/>
</dbReference>
<dbReference type="NCBIfam" id="NF006929">
    <property type="entry name" value="PRK09414.1"/>
    <property type="match status" value="1"/>
</dbReference>
<dbReference type="PANTHER" id="PTHR43571">
    <property type="entry name" value="NADP-SPECIFIC GLUTAMATE DEHYDROGENASE 1-RELATED"/>
    <property type="match status" value="1"/>
</dbReference>
<dbReference type="PANTHER" id="PTHR43571:SF1">
    <property type="entry name" value="NADP-SPECIFIC GLUTAMATE DEHYDROGENASE 1-RELATED"/>
    <property type="match status" value="1"/>
</dbReference>
<dbReference type="Pfam" id="PF00208">
    <property type="entry name" value="ELFV_dehydrog"/>
    <property type="match status" value="1"/>
</dbReference>
<dbReference type="Pfam" id="PF02812">
    <property type="entry name" value="ELFV_dehydrog_N"/>
    <property type="match status" value="1"/>
</dbReference>
<dbReference type="PIRSF" id="PIRSF000185">
    <property type="entry name" value="Glu_DH"/>
    <property type="match status" value="1"/>
</dbReference>
<dbReference type="PRINTS" id="PR00082">
    <property type="entry name" value="GLFDHDRGNASE"/>
</dbReference>
<dbReference type="SMART" id="SM00839">
    <property type="entry name" value="ELFV_dehydrog"/>
    <property type="match status" value="1"/>
</dbReference>
<dbReference type="SUPFAM" id="SSF53223">
    <property type="entry name" value="Aminoacid dehydrogenase-like, N-terminal domain"/>
    <property type="match status" value="1"/>
</dbReference>
<dbReference type="SUPFAM" id="SSF51735">
    <property type="entry name" value="NAD(P)-binding Rossmann-fold domains"/>
    <property type="match status" value="1"/>
</dbReference>
<dbReference type="PROSITE" id="PS00074">
    <property type="entry name" value="GLFV_DEHYDROGENASE"/>
    <property type="match status" value="1"/>
</dbReference>
<sequence>MEYAVSVESFLSSLQRHNPHQPEYLQAVREVFTSLWPFIERNPAYREQALLERLVEPERIIQFRVSWVDDRGQVQVNRAFRVQFNSAIGPYKGGMRFHPSVNLSILKFLGFEQTFKNALTTLPMGGGKGGSDFDPKGKSQGRIMRFCQALMTELYRHLGPDTDVPAGDIGDGGREVGFMAGMMKKLSNNTACVFTGKGLSFGGSLIRPEATGYGLVYFTDAMLQRHGLGFEGMRVAVSGSGNVAQYTIEKALELDARVITVSDSGGTLVDEDGFTTEKLAHLAEIKNQRYGRVADYAAERGLTYLAGQQPWNVPVDIALPCATQNELDLEAARVIRNGVKAVAEGANMPTTIQATDAFLDAGVLFAPGKAANAAGLATSGLEMAQNAARIGWRAEKVDVRLQHIMADIHHACVEYGGEGKQTHYVHGANIAGFVKVAEAMLAQGVL</sequence>
<organism>
    <name type="scientific">Unknown prokaryotic organism</name>
    <dbReference type="NCBI Taxonomy" id="2725"/>
    <lineage>
        <taxon>Bacteria</taxon>
        <taxon>environmental samples</taxon>
    </lineage>
</organism>
<comment type="function">
    <text evidence="1">Catalyzes the reversible oxidative deamination of glutamate to a-ketoglutarate and ammonia.</text>
</comment>
<comment type="catalytic activity">
    <reaction>
        <text>L-glutamate + NADP(+) + H2O = 2-oxoglutarate + NH4(+) + NADPH + H(+)</text>
        <dbReference type="Rhea" id="RHEA:11612"/>
        <dbReference type="ChEBI" id="CHEBI:15377"/>
        <dbReference type="ChEBI" id="CHEBI:15378"/>
        <dbReference type="ChEBI" id="CHEBI:16810"/>
        <dbReference type="ChEBI" id="CHEBI:28938"/>
        <dbReference type="ChEBI" id="CHEBI:29985"/>
        <dbReference type="ChEBI" id="CHEBI:57783"/>
        <dbReference type="ChEBI" id="CHEBI:58349"/>
        <dbReference type="EC" id="1.4.1.4"/>
    </reaction>
</comment>
<comment type="subunit">
    <text evidence="1">Homohexamer.</text>
</comment>
<comment type="similarity">
    <text evidence="3">Belongs to the Glu/Leu/Phe/Val dehydrogenases family.</text>
</comment>
<comment type="caution">
    <text evidence="3">This sequence originates from an organism contaminating a Chlorella sorokiniana culture, probably a bacterium.</text>
</comment>
<evidence type="ECO:0000250" key="1"/>
<evidence type="ECO:0000255" key="2">
    <source>
        <dbReference type="PROSITE-ProRule" id="PRU10011"/>
    </source>
</evidence>
<evidence type="ECO:0000305" key="3"/>
<accession>P14657</accession>
<protein>
    <recommendedName>
        <fullName>NADP-specific glutamate dehydrogenase</fullName>
        <shortName>NADP-GDH</shortName>
        <ecNumber>1.4.1.4</ecNumber>
    </recommendedName>
</protein>
<feature type="chain" id="PRO_0000182778" description="NADP-specific glutamate dehydrogenase">
    <location>
        <begin position="1"/>
        <end position="446"/>
    </location>
</feature>
<feature type="active site" description="Proton donor" evidence="2">
    <location>
        <position position="128"/>
    </location>
</feature>
<feature type="binding site" evidence="1">
    <location>
        <position position="92"/>
    </location>
    <ligand>
        <name>substrate</name>
    </ligand>
</feature>
<feature type="binding site" evidence="1">
    <location>
        <position position="113"/>
    </location>
    <ligand>
        <name>substrate</name>
    </ligand>
</feature>
<feature type="binding site" evidence="1">
    <location>
        <position position="116"/>
    </location>
    <ligand>
        <name>substrate</name>
    </ligand>
</feature>
<feature type="binding site" evidence="1">
    <location>
        <position position="167"/>
    </location>
    <ligand>
        <name>substrate</name>
    </ligand>
</feature>
<feature type="binding site" evidence="1">
    <location>
        <position position="211"/>
    </location>
    <ligand>
        <name>NADP(+)</name>
        <dbReference type="ChEBI" id="CHEBI:58349"/>
    </ligand>
</feature>
<feature type="binding site" evidence="1">
    <location>
        <position position="242"/>
    </location>
    <ligand>
        <name>NADP(+)</name>
        <dbReference type="ChEBI" id="CHEBI:58349"/>
    </ligand>
</feature>
<feature type="binding site" evidence="1">
    <location>
        <position position="379"/>
    </location>
    <ligand>
        <name>substrate</name>
    </ligand>
</feature>
<feature type="site" description="Important for catalysis" evidence="1">
    <location>
        <position position="168"/>
    </location>
</feature>
<name>DHE4_UNKP</name>
<reference key="1">
    <citation type="journal article" date="1989" name="Nucleic Acids Res.">
        <title>A glutamate dehydrogenase gene sequence.</title>
        <authorList>
            <person name="Cock J.M."/>
            <person name="Schmidt R.R."/>
        </authorList>
    </citation>
    <scope>NUCLEOTIDE SEQUENCE [GENOMIC DNA]</scope>
</reference>